<name>Y2034_CUTAK</name>
<proteinExistence type="inferred from homology"/>
<reference key="1">
    <citation type="journal article" date="2004" name="Science">
        <title>The complete genome sequence of Propionibacterium acnes, a commensal of human skin.</title>
        <authorList>
            <person name="Brueggemann H."/>
            <person name="Henne A."/>
            <person name="Hoster F."/>
            <person name="Liesegang H."/>
            <person name="Wiezer A."/>
            <person name="Strittmatter A."/>
            <person name="Hujer S."/>
            <person name="Duerre P."/>
            <person name="Gottschalk G."/>
        </authorList>
    </citation>
    <scope>NUCLEOTIDE SEQUENCE [LARGE SCALE GENOMIC DNA]</scope>
    <source>
        <strain>DSM 16379 / KPA171202</strain>
    </source>
</reference>
<sequence>MTVLTDFLATHQLLTILIVLASGALLGQIKFGPLRFGAAGALFMGLVVGALDPRFGQNLGMIKGLGVVLFCYTVGLAAGSTFLSDLKRQWGLMLAGVVGLAVMAAAGLGLGRLFGLTPAHVAGLYAGVLTSPAIDAASMATHGAADTLVGYALSYPVGVVVGLIMVAIIAKRCWPASKDNTSMAEAGLTAVSTVVDRETSIRQTPGFNDDQVRMSYLLRDGEMRLATPDDDLHVGDQVLVVGNPDDVNRAVEHLGHVSERTLTNERNELDFRRFVVSNPALVGRTLGSIDVRGRTSGKVTRVRRGDLDMLARSDIVLQPGDRVLCVVPAHRLSDAADLFGDSEARVSQVDALSLGLGAALGLLLGALMVALPRGLQFELGTAAGPLVMGMILGSIHRTGPLRWQLPHATNAILRQLGLMIFLACVGLASGPAFLSQAVSGTGLAVIAVSAVTLVLGGAIVIAAAWCMKLSAQRATGAFAGFVGQPAILSYANSLVNDERIESAYGALFALGTVVKILLVQVIVLV</sequence>
<accession>Q6A666</accession>
<feature type="chain" id="PRO_0000208777" description="Uncharacterized transporter PPA2034">
    <location>
        <begin position="1"/>
        <end position="525"/>
    </location>
</feature>
<feature type="transmembrane region" description="Helical" evidence="1">
    <location>
        <begin position="7"/>
        <end position="29"/>
    </location>
</feature>
<feature type="transmembrane region" description="Helical" evidence="1">
    <location>
        <begin position="34"/>
        <end position="51"/>
    </location>
</feature>
<feature type="transmembrane region" description="Helical" evidence="1">
    <location>
        <begin position="64"/>
        <end position="82"/>
    </location>
</feature>
<feature type="transmembrane region" description="Helical" evidence="1">
    <location>
        <begin position="92"/>
        <end position="114"/>
    </location>
</feature>
<feature type="transmembrane region" description="Helical" evidence="1">
    <location>
        <begin position="121"/>
        <end position="143"/>
    </location>
</feature>
<feature type="transmembrane region" description="Helical" evidence="1">
    <location>
        <begin position="148"/>
        <end position="170"/>
    </location>
</feature>
<feature type="transmembrane region" description="Helical" evidence="1">
    <location>
        <begin position="351"/>
        <end position="370"/>
    </location>
</feature>
<feature type="transmembrane region" description="Helical" evidence="1">
    <location>
        <begin position="374"/>
        <end position="396"/>
    </location>
</feature>
<feature type="transmembrane region" description="Helical" evidence="1">
    <location>
        <begin position="416"/>
        <end position="438"/>
    </location>
</feature>
<feature type="transmembrane region" description="Helical" evidence="1">
    <location>
        <begin position="443"/>
        <end position="465"/>
    </location>
</feature>
<feature type="transmembrane region" description="Helical" evidence="1">
    <location>
        <begin position="502"/>
        <end position="524"/>
    </location>
</feature>
<feature type="domain" description="RCK C-terminal 1" evidence="2">
    <location>
        <begin position="178"/>
        <end position="257"/>
    </location>
</feature>
<feature type="domain" description="RCK C-terminal 2" evidence="2">
    <location>
        <begin position="259"/>
        <end position="341"/>
    </location>
</feature>
<organism>
    <name type="scientific">Cutibacterium acnes (strain DSM 16379 / KPA171202)</name>
    <name type="common">Propionibacterium acnes</name>
    <dbReference type="NCBI Taxonomy" id="267747"/>
    <lineage>
        <taxon>Bacteria</taxon>
        <taxon>Bacillati</taxon>
        <taxon>Actinomycetota</taxon>
        <taxon>Actinomycetes</taxon>
        <taxon>Propionibacteriales</taxon>
        <taxon>Propionibacteriaceae</taxon>
        <taxon>Cutibacterium</taxon>
    </lineage>
</organism>
<keyword id="KW-1003">Cell membrane</keyword>
<keyword id="KW-0472">Membrane</keyword>
<keyword id="KW-0677">Repeat</keyword>
<keyword id="KW-0812">Transmembrane</keyword>
<keyword id="KW-1133">Transmembrane helix</keyword>
<keyword id="KW-0813">Transport</keyword>
<dbReference type="EMBL" id="AE017283">
    <property type="protein sequence ID" value="AAT83747.1"/>
    <property type="molecule type" value="Genomic_DNA"/>
</dbReference>
<dbReference type="RefSeq" id="WP_002516194.1">
    <property type="nucleotide sequence ID" value="NZ_CP025935.1"/>
</dbReference>
<dbReference type="SMR" id="Q6A666"/>
<dbReference type="EnsemblBacteria" id="AAT83747">
    <property type="protein sequence ID" value="AAT83747"/>
    <property type="gene ID" value="PPA2034"/>
</dbReference>
<dbReference type="KEGG" id="pac:PPA2034"/>
<dbReference type="eggNOG" id="COG0569">
    <property type="taxonomic scope" value="Bacteria"/>
</dbReference>
<dbReference type="eggNOG" id="COG2985">
    <property type="taxonomic scope" value="Bacteria"/>
</dbReference>
<dbReference type="HOGENOM" id="CLU_035023_3_0_11"/>
<dbReference type="Proteomes" id="UP000000603">
    <property type="component" value="Chromosome"/>
</dbReference>
<dbReference type="GO" id="GO:0005886">
    <property type="term" value="C:plasma membrane"/>
    <property type="evidence" value="ECO:0007669"/>
    <property type="project" value="UniProtKB-SubCell"/>
</dbReference>
<dbReference type="GO" id="GO:0008324">
    <property type="term" value="F:monoatomic cation transmembrane transporter activity"/>
    <property type="evidence" value="ECO:0007669"/>
    <property type="project" value="InterPro"/>
</dbReference>
<dbReference type="GO" id="GO:0006813">
    <property type="term" value="P:potassium ion transport"/>
    <property type="evidence" value="ECO:0007669"/>
    <property type="project" value="InterPro"/>
</dbReference>
<dbReference type="Gene3D" id="3.30.70.1450">
    <property type="entry name" value="Regulator of K+ conductance, C-terminal domain"/>
    <property type="match status" value="1"/>
</dbReference>
<dbReference type="InterPro" id="IPR050144">
    <property type="entry name" value="AAE_transporter"/>
</dbReference>
<dbReference type="InterPro" id="IPR006037">
    <property type="entry name" value="RCK_C"/>
</dbReference>
<dbReference type="InterPro" id="IPR036721">
    <property type="entry name" value="RCK_C_sf"/>
</dbReference>
<dbReference type="InterPro" id="IPR006512">
    <property type="entry name" value="YidE_YbjL"/>
</dbReference>
<dbReference type="NCBIfam" id="TIGR01625">
    <property type="entry name" value="YidE_YbjL_dupl"/>
    <property type="match status" value="1"/>
</dbReference>
<dbReference type="PANTHER" id="PTHR30445">
    <property type="entry name" value="K(+)_H(+) ANTIPORTER SUBUNIT KHTT"/>
    <property type="match status" value="1"/>
</dbReference>
<dbReference type="PANTHER" id="PTHR30445:SF3">
    <property type="entry name" value="TRANSPORT PROTEIN YIDE-RELATED"/>
    <property type="match status" value="1"/>
</dbReference>
<dbReference type="Pfam" id="PF06826">
    <property type="entry name" value="Asp-Al_Ex"/>
    <property type="match status" value="2"/>
</dbReference>
<dbReference type="Pfam" id="PF02080">
    <property type="entry name" value="TrkA_C"/>
    <property type="match status" value="1"/>
</dbReference>
<dbReference type="SUPFAM" id="SSF116726">
    <property type="entry name" value="TrkA C-terminal domain-like"/>
    <property type="match status" value="2"/>
</dbReference>
<dbReference type="PROSITE" id="PS51202">
    <property type="entry name" value="RCK_C"/>
    <property type="match status" value="2"/>
</dbReference>
<protein>
    <recommendedName>
        <fullName>Uncharacterized transporter PPA2034</fullName>
    </recommendedName>
</protein>
<evidence type="ECO:0000255" key="1"/>
<evidence type="ECO:0000255" key="2">
    <source>
        <dbReference type="PROSITE-ProRule" id="PRU00544"/>
    </source>
</evidence>
<evidence type="ECO:0000305" key="3"/>
<gene>
    <name type="ordered locus">PPA2034</name>
</gene>
<comment type="subcellular location">
    <subcellularLocation>
        <location evidence="3">Cell membrane</location>
        <topology evidence="3">Multi-pass membrane protein</topology>
    </subcellularLocation>
</comment>
<comment type="similarity">
    <text evidence="3">Belongs to the AAE transporter (TC 2.A.81) family.</text>
</comment>